<organismHost>
    <name type="scientific">Spiroplasma melliferum</name>
    <dbReference type="NCBI Taxonomy" id="2134"/>
</organismHost>
<keyword id="KW-1043">Host membrane</keyword>
<keyword id="KW-0472">Membrane</keyword>
<keyword id="KW-1185">Reference proteome</keyword>
<keyword id="KW-0812">Transmembrane</keyword>
<keyword id="KW-1133">Transmembrane helix</keyword>
<gene>
    <name type="ORF">ORF13</name>
</gene>
<name>ORF13_SPV1C</name>
<proteinExistence type="predicted"/>
<comment type="subcellular location">
    <subcellularLocation>
        <location evidence="2">Host membrane</location>
        <topology evidence="2">Single-pass membrane protein</topology>
    </subcellularLocation>
</comment>
<sequence>MSLYDYWVQFVSYIIGANAPEFLYVISFVLFIVLFFGMFFKLIQKMWSF</sequence>
<protein>
    <recommendedName>
        <fullName>Uncharacterized protein ORF13</fullName>
    </recommendedName>
</protein>
<organism>
    <name type="scientific">Spiroplasma virus SpV1-C74</name>
    <name type="common">SpV1</name>
    <dbReference type="NCBI Taxonomy" id="185959"/>
    <lineage>
        <taxon>Viruses</taxon>
        <taxon>Monodnaviria</taxon>
        <taxon>Loebvirae</taxon>
        <taxon>Hofneiviricota</taxon>
        <taxon>Faserviricetes</taxon>
        <taxon>Tubulavirales</taxon>
        <taxon>Plectroviridae</taxon>
        <taxon>Vespertiliovirus</taxon>
        <taxon>Vespertiliovirus C74</taxon>
    </lineage>
</organism>
<accession>Q88424</accession>
<reference key="1">
    <citation type="journal article" date="1996" name="Curr. Microbiol.">
        <title>Spiroplasma citri Virus SpV1: Characterization of viral sequences present in the spiroplasmal host chromosome.</title>
        <authorList>
            <person name="Bebear C.M."/>
            <person name="Aullo P."/>
            <person name="Bove J."/>
            <person name="Renaudin J."/>
        </authorList>
    </citation>
    <scope>NUCLEOTIDE SEQUENCE [GENOMIC DNA]</scope>
</reference>
<dbReference type="EMBL" id="U28974">
    <property type="protein sequence ID" value="AAA85017.1"/>
    <property type="molecule type" value="Genomic_DNA"/>
</dbReference>
<dbReference type="RefSeq" id="NP_620631.1">
    <property type="nucleotide sequence ID" value="NC_003793.1"/>
</dbReference>
<dbReference type="SMR" id="Q88424"/>
<dbReference type="KEGG" id="vg:944362"/>
<dbReference type="Proteomes" id="UP000001764">
    <property type="component" value="Genome"/>
</dbReference>
<dbReference type="GO" id="GO:0033644">
    <property type="term" value="C:host cell membrane"/>
    <property type="evidence" value="ECO:0007669"/>
    <property type="project" value="UniProtKB-SubCell"/>
</dbReference>
<dbReference type="GO" id="GO:0016020">
    <property type="term" value="C:membrane"/>
    <property type="evidence" value="ECO:0007669"/>
    <property type="project" value="UniProtKB-KW"/>
</dbReference>
<evidence type="ECO:0000255" key="1"/>
<evidence type="ECO:0000305" key="2"/>
<feature type="chain" id="PRO_0000372073" description="Uncharacterized protein ORF13">
    <location>
        <begin position="1"/>
        <end position="49"/>
    </location>
</feature>
<feature type="transmembrane region" description="Helical" evidence="1">
    <location>
        <begin position="23"/>
        <end position="43"/>
    </location>
</feature>